<accession>P22263</accession>
<evidence type="ECO:0000250" key="1"/>
<evidence type="ECO:0000255" key="2">
    <source>
        <dbReference type="PROSITE-ProRule" id="PRU00473"/>
    </source>
</evidence>
<evidence type="ECO:0000305" key="3"/>
<organism>
    <name type="scientific">Pseudomonas syringae pv. syringae</name>
    <dbReference type="NCBI Taxonomy" id="321"/>
    <lineage>
        <taxon>Bacteria</taxon>
        <taxon>Pseudomonadati</taxon>
        <taxon>Pseudomonadota</taxon>
        <taxon>Gammaproteobacteria</taxon>
        <taxon>Pseudomonadales</taxon>
        <taxon>Pseudomonadaceae</taxon>
        <taxon>Pseudomonas</taxon>
        <taxon>Pseudomonas syringae</taxon>
    </lineage>
</organism>
<feature type="signal peptide" evidence="1">
    <location>
        <begin position="1"/>
        <end position="24"/>
    </location>
</feature>
<feature type="chain" id="PRO_0000020117" description="Outer membrane porin F">
    <location>
        <begin position="25"/>
        <end position="344"/>
    </location>
</feature>
<feature type="domain" description="OmpA-like" evidence="2">
    <location>
        <begin position="225"/>
        <end position="343"/>
    </location>
</feature>
<proteinExistence type="inferred from homology"/>
<comment type="function">
    <text>Has porin activity, forming small water-filled channels. Also has a structural role in determining cell shape and ability to grow in low-osmolarity medium.</text>
</comment>
<comment type="subcellular location">
    <subcellularLocation>
        <location>Cell outer membrane</location>
        <topology>Multi-pass membrane protein</topology>
    </subcellularLocation>
</comment>
<comment type="PTM">
    <text>Contains two disulfide bonds.</text>
</comment>
<comment type="similarity">
    <text evidence="3">Belongs to the outer membrane OOP (TC 1.B.6) superfamily.</text>
</comment>
<sequence>MKLKNTLGLAIGTIVAATSFGALAQGQGAVEIEGFAKKEMYDSARDFKNNGNLFGGSIGYFLTDDVELRLGYDEVHNVRSDDGKNIKGADTALDALYHFNNPGDMLRPYVSAGFSDQSIGQNGRNGRNGSTFANIGGGPKLYFTDNFYARAGVEAQYNIDQGDTEWAPSVGIGVNFGGGSKKVEAAPAPVAEVCSDSDNDGVCDNVDKCPDTPANVTVDADGCPAVAEVVRVELDVKFDFDKSVVKPNSYGDIKNLADFMQQYPQTTTTVEGHTDSVGPDAYNQKLSERRANAVKQVLVNQYGVGASRVNSVGYGESKPVADNATEAGRAVNRRVEAEVEAQAK</sequence>
<dbReference type="EMBL" id="M55408">
    <property type="protein sequence ID" value="AAA25910.1"/>
    <property type="molecule type" value="Genomic_DNA"/>
</dbReference>
<dbReference type="PIR" id="A39139">
    <property type="entry name" value="A39139"/>
</dbReference>
<dbReference type="SMR" id="P22263"/>
<dbReference type="GO" id="GO:0009279">
    <property type="term" value="C:cell outer membrane"/>
    <property type="evidence" value="ECO:0007669"/>
    <property type="project" value="UniProtKB-SubCell"/>
</dbReference>
<dbReference type="GO" id="GO:0046930">
    <property type="term" value="C:pore complex"/>
    <property type="evidence" value="ECO:0007669"/>
    <property type="project" value="UniProtKB-KW"/>
</dbReference>
<dbReference type="GO" id="GO:0005509">
    <property type="term" value="F:calcium ion binding"/>
    <property type="evidence" value="ECO:0007669"/>
    <property type="project" value="InterPro"/>
</dbReference>
<dbReference type="GO" id="GO:0015288">
    <property type="term" value="F:porin activity"/>
    <property type="evidence" value="ECO:0007669"/>
    <property type="project" value="UniProtKB-KW"/>
</dbReference>
<dbReference type="GO" id="GO:0006811">
    <property type="term" value="P:monoatomic ion transport"/>
    <property type="evidence" value="ECO:0007669"/>
    <property type="project" value="UniProtKB-KW"/>
</dbReference>
<dbReference type="GO" id="GO:0008360">
    <property type="term" value="P:regulation of cell shape"/>
    <property type="evidence" value="ECO:0007669"/>
    <property type="project" value="UniProtKB-KW"/>
</dbReference>
<dbReference type="CDD" id="cd07185">
    <property type="entry name" value="OmpA_C-like"/>
    <property type="match status" value="1"/>
</dbReference>
<dbReference type="Gene3D" id="2.40.160.20">
    <property type="match status" value="1"/>
</dbReference>
<dbReference type="Gene3D" id="3.30.1330.60">
    <property type="entry name" value="OmpA-like domain"/>
    <property type="match status" value="1"/>
</dbReference>
<dbReference type="InterPro" id="IPR050330">
    <property type="entry name" value="Bact_OuterMem_StrucFunc"/>
</dbReference>
<dbReference type="InterPro" id="IPR011250">
    <property type="entry name" value="OMP/PagP_b-brl"/>
</dbReference>
<dbReference type="InterPro" id="IPR006664">
    <property type="entry name" value="OMP_bac"/>
</dbReference>
<dbReference type="InterPro" id="IPR006665">
    <property type="entry name" value="OmpA-like"/>
</dbReference>
<dbReference type="InterPro" id="IPR006690">
    <property type="entry name" value="OMPA-like_CS"/>
</dbReference>
<dbReference type="InterPro" id="IPR036737">
    <property type="entry name" value="OmpA-like_sf"/>
</dbReference>
<dbReference type="InterPro" id="IPR008722">
    <property type="entry name" value="OprF_membrane_N"/>
</dbReference>
<dbReference type="InterPro" id="IPR028974">
    <property type="entry name" value="TSP_type-3_rpt"/>
</dbReference>
<dbReference type="PANTHER" id="PTHR30329:SF21">
    <property type="entry name" value="LIPOPROTEIN YIAD-RELATED"/>
    <property type="match status" value="1"/>
</dbReference>
<dbReference type="PANTHER" id="PTHR30329">
    <property type="entry name" value="STATOR ELEMENT OF FLAGELLAR MOTOR COMPLEX"/>
    <property type="match status" value="1"/>
</dbReference>
<dbReference type="Pfam" id="PF00691">
    <property type="entry name" value="OmpA"/>
    <property type="match status" value="1"/>
</dbReference>
<dbReference type="Pfam" id="PF05736">
    <property type="entry name" value="OprF"/>
    <property type="match status" value="1"/>
</dbReference>
<dbReference type="PRINTS" id="PR01021">
    <property type="entry name" value="OMPADOMAIN"/>
</dbReference>
<dbReference type="SUPFAM" id="SSF56925">
    <property type="entry name" value="OMPA-like"/>
    <property type="match status" value="1"/>
</dbReference>
<dbReference type="SUPFAM" id="SSF103088">
    <property type="entry name" value="OmpA-like"/>
    <property type="match status" value="1"/>
</dbReference>
<dbReference type="SUPFAM" id="SSF103647">
    <property type="entry name" value="TSP type-3 repeat"/>
    <property type="match status" value="1"/>
</dbReference>
<dbReference type="PROSITE" id="PS01068">
    <property type="entry name" value="OMPA_1"/>
    <property type="match status" value="1"/>
</dbReference>
<dbReference type="PROSITE" id="PS51123">
    <property type="entry name" value="OMPA_2"/>
    <property type="match status" value="1"/>
</dbReference>
<name>PORF_PSESY</name>
<reference key="1">
    <citation type="journal article" date="1991" name="J. Bacteriol.">
        <title>Conservation of the gene for outer membrane protein OprF in the family Pseudomonadaceae: sequence of the Pseudomonas syringae oprF gene.</title>
        <authorList>
            <person name="Ullstrom C.A."/>
            <person name="Siehnel R."/>
            <person name="Woodruff W."/>
            <person name="Steinbach S."/>
            <person name="Hancock R.E.W."/>
        </authorList>
    </citation>
    <scope>NUCLEOTIDE SEQUENCE [GENOMIC DNA]</scope>
    <source>
        <strain>ATCC 19310 / DSM 10604 / CCUG 14279 / ICMP 3023 / LMG 1247 / NCPPB 281</strain>
    </source>
</reference>
<keyword id="KW-0998">Cell outer membrane</keyword>
<keyword id="KW-0133">Cell shape</keyword>
<keyword id="KW-1015">Disulfide bond</keyword>
<keyword id="KW-0406">Ion transport</keyword>
<keyword id="KW-0472">Membrane</keyword>
<keyword id="KW-0626">Porin</keyword>
<keyword id="KW-0732">Signal</keyword>
<keyword id="KW-0812">Transmembrane</keyword>
<keyword id="KW-1134">Transmembrane beta strand</keyword>
<keyword id="KW-0813">Transport</keyword>
<protein>
    <recommendedName>
        <fullName>Outer membrane porin F</fullName>
    </recommendedName>
</protein>
<gene>
    <name type="primary">oprF</name>
</gene>